<proteinExistence type="inferred from homology"/>
<evidence type="ECO:0000255" key="1">
    <source>
        <dbReference type="HAMAP-Rule" id="MF_01396"/>
    </source>
</evidence>
<name>ATPL_HAEIG</name>
<organism>
    <name type="scientific">Haemophilus influenzae (strain PittGG)</name>
    <dbReference type="NCBI Taxonomy" id="374931"/>
    <lineage>
        <taxon>Bacteria</taxon>
        <taxon>Pseudomonadati</taxon>
        <taxon>Pseudomonadota</taxon>
        <taxon>Gammaproteobacteria</taxon>
        <taxon>Pasteurellales</taxon>
        <taxon>Pasteurellaceae</taxon>
        <taxon>Haemophilus</taxon>
    </lineage>
</organism>
<reference key="1">
    <citation type="journal article" date="2007" name="Genome Biol.">
        <title>Characterization and modeling of the Haemophilus influenzae core and supragenomes based on the complete genomic sequences of Rd and 12 clinical nontypeable strains.</title>
        <authorList>
            <person name="Hogg J.S."/>
            <person name="Hu F.Z."/>
            <person name="Janto B."/>
            <person name="Boissy R."/>
            <person name="Hayes J."/>
            <person name="Keefe R."/>
            <person name="Post J.C."/>
            <person name="Ehrlich G.D."/>
        </authorList>
    </citation>
    <scope>NUCLEOTIDE SEQUENCE [LARGE SCALE GENOMIC DNA]</scope>
    <source>
        <strain>PittGG</strain>
    </source>
</reference>
<dbReference type="EMBL" id="CP000672">
    <property type="protein sequence ID" value="ABR00050.1"/>
    <property type="molecule type" value="Genomic_DNA"/>
</dbReference>
<dbReference type="SMR" id="A5UGZ4"/>
<dbReference type="KEGG" id="hiq:CGSHiGG_05675"/>
<dbReference type="HOGENOM" id="CLU_148047_1_0_6"/>
<dbReference type="Proteomes" id="UP000001990">
    <property type="component" value="Chromosome"/>
</dbReference>
<dbReference type="GO" id="GO:0005886">
    <property type="term" value="C:plasma membrane"/>
    <property type="evidence" value="ECO:0007669"/>
    <property type="project" value="UniProtKB-SubCell"/>
</dbReference>
<dbReference type="GO" id="GO:0045259">
    <property type="term" value="C:proton-transporting ATP synthase complex"/>
    <property type="evidence" value="ECO:0007669"/>
    <property type="project" value="UniProtKB-KW"/>
</dbReference>
<dbReference type="GO" id="GO:0033177">
    <property type="term" value="C:proton-transporting two-sector ATPase complex, proton-transporting domain"/>
    <property type="evidence" value="ECO:0007669"/>
    <property type="project" value="InterPro"/>
</dbReference>
<dbReference type="GO" id="GO:0008289">
    <property type="term" value="F:lipid binding"/>
    <property type="evidence" value="ECO:0007669"/>
    <property type="project" value="UniProtKB-KW"/>
</dbReference>
<dbReference type="GO" id="GO:0046933">
    <property type="term" value="F:proton-transporting ATP synthase activity, rotational mechanism"/>
    <property type="evidence" value="ECO:0007669"/>
    <property type="project" value="UniProtKB-UniRule"/>
</dbReference>
<dbReference type="CDD" id="cd18185">
    <property type="entry name" value="ATP-synt_Fo_c_ATPE"/>
    <property type="match status" value="1"/>
</dbReference>
<dbReference type="FunFam" id="1.20.20.10:FF:000002">
    <property type="entry name" value="ATP synthase subunit c"/>
    <property type="match status" value="1"/>
</dbReference>
<dbReference type="Gene3D" id="1.20.20.10">
    <property type="entry name" value="F1F0 ATP synthase subunit C"/>
    <property type="match status" value="1"/>
</dbReference>
<dbReference type="HAMAP" id="MF_01396">
    <property type="entry name" value="ATP_synth_c_bact"/>
    <property type="match status" value="1"/>
</dbReference>
<dbReference type="InterPro" id="IPR005953">
    <property type="entry name" value="ATP_synth_csu_bac/chlpt"/>
</dbReference>
<dbReference type="InterPro" id="IPR000454">
    <property type="entry name" value="ATP_synth_F0_csu"/>
</dbReference>
<dbReference type="InterPro" id="IPR020537">
    <property type="entry name" value="ATP_synth_F0_csu_DDCD_BS"/>
</dbReference>
<dbReference type="InterPro" id="IPR038662">
    <property type="entry name" value="ATP_synth_F0_csu_sf"/>
</dbReference>
<dbReference type="InterPro" id="IPR002379">
    <property type="entry name" value="ATPase_proteolipid_c-like_dom"/>
</dbReference>
<dbReference type="InterPro" id="IPR035921">
    <property type="entry name" value="F/V-ATP_Csub_sf"/>
</dbReference>
<dbReference type="NCBIfam" id="TIGR01260">
    <property type="entry name" value="ATP_synt_c"/>
    <property type="match status" value="1"/>
</dbReference>
<dbReference type="NCBIfam" id="NF005363">
    <property type="entry name" value="PRK06876.1"/>
    <property type="match status" value="1"/>
</dbReference>
<dbReference type="Pfam" id="PF00137">
    <property type="entry name" value="ATP-synt_C"/>
    <property type="match status" value="1"/>
</dbReference>
<dbReference type="PRINTS" id="PR00124">
    <property type="entry name" value="ATPASEC"/>
</dbReference>
<dbReference type="SUPFAM" id="SSF81333">
    <property type="entry name" value="F1F0 ATP synthase subunit C"/>
    <property type="match status" value="1"/>
</dbReference>
<dbReference type="PROSITE" id="PS00605">
    <property type="entry name" value="ATPASE_C"/>
    <property type="match status" value="1"/>
</dbReference>
<accession>A5UGZ4</accession>
<comment type="function">
    <text evidence="1">F(1)F(0) ATP synthase produces ATP from ADP in the presence of a proton or sodium gradient. F-type ATPases consist of two structural domains, F(1) containing the extramembraneous catalytic core and F(0) containing the membrane proton channel, linked together by a central stalk and a peripheral stalk. During catalysis, ATP synthesis in the catalytic domain of F(1) is coupled via a rotary mechanism of the central stalk subunits to proton translocation.</text>
</comment>
<comment type="function">
    <text evidence="1">Key component of the F(0) channel; it plays a direct role in translocation across the membrane. A homomeric c-ring of between 10-14 subunits forms the central stalk rotor element with the F(1) delta and epsilon subunits.</text>
</comment>
<comment type="subunit">
    <text evidence="1">F-type ATPases have 2 components, F(1) - the catalytic core - and F(0) - the membrane proton channel. F(1) has five subunits: alpha(3), beta(3), gamma(1), delta(1), epsilon(1). F(0) has three main subunits: a(1), b(2) and c(10-14). The alpha and beta chains form an alternating ring which encloses part of the gamma chain. F(1) is attached to F(0) by a central stalk formed by the gamma and epsilon chains, while a peripheral stalk is formed by the delta and b chains.</text>
</comment>
<comment type="subcellular location">
    <subcellularLocation>
        <location evidence="1">Cell inner membrane</location>
        <topology evidence="1">Multi-pass membrane protein</topology>
    </subcellularLocation>
</comment>
<comment type="similarity">
    <text evidence="1">Belongs to the ATPase C chain family.</text>
</comment>
<feature type="chain" id="PRO_1000184387" description="ATP synthase subunit c">
    <location>
        <begin position="1"/>
        <end position="84"/>
    </location>
</feature>
<feature type="transmembrane region" description="Helical" evidence="1">
    <location>
        <begin position="9"/>
        <end position="29"/>
    </location>
</feature>
<feature type="transmembrane region" description="Helical" evidence="1">
    <location>
        <begin position="54"/>
        <end position="74"/>
    </location>
</feature>
<feature type="site" description="Reversibly protonated during proton transport" evidence="1">
    <location>
        <position position="60"/>
    </location>
</feature>
<sequence>METVITATIIGASILLAFAALGTAIGFAILGGKFLESSARQPELASSLQTKMFIVAGLLDAIAMIAVGISLLFIFANPFIGLLN</sequence>
<gene>
    <name evidence="1" type="primary">atpE</name>
    <name type="ordered locus">CGSHiGG_05675</name>
</gene>
<protein>
    <recommendedName>
        <fullName evidence="1">ATP synthase subunit c</fullName>
    </recommendedName>
    <alternativeName>
        <fullName evidence="1">ATP synthase F(0) sector subunit c</fullName>
    </alternativeName>
    <alternativeName>
        <fullName evidence="1">F-type ATPase subunit c</fullName>
        <shortName evidence="1">F-ATPase subunit c</shortName>
    </alternativeName>
    <alternativeName>
        <fullName evidence="1">Lipid-binding protein</fullName>
    </alternativeName>
</protein>
<keyword id="KW-0066">ATP synthesis</keyword>
<keyword id="KW-0997">Cell inner membrane</keyword>
<keyword id="KW-1003">Cell membrane</keyword>
<keyword id="KW-0138">CF(0)</keyword>
<keyword id="KW-0375">Hydrogen ion transport</keyword>
<keyword id="KW-0406">Ion transport</keyword>
<keyword id="KW-0446">Lipid-binding</keyword>
<keyword id="KW-0472">Membrane</keyword>
<keyword id="KW-0812">Transmembrane</keyword>
<keyword id="KW-1133">Transmembrane helix</keyword>
<keyword id="KW-0813">Transport</keyword>